<dbReference type="EMBL" id="AE000666">
    <property type="protein sequence ID" value="AAB85285.1"/>
    <property type="status" value="ALT_INIT"/>
    <property type="molecule type" value="Genomic_DNA"/>
</dbReference>
<dbReference type="PIR" id="F69204">
    <property type="entry name" value="F69204"/>
</dbReference>
<dbReference type="RefSeq" id="WP_048060898.1">
    <property type="nucleotide sequence ID" value="NC_000916.1"/>
</dbReference>
<dbReference type="SMR" id="O26876"/>
<dbReference type="STRING" id="187420.MTH_783"/>
<dbReference type="PaxDb" id="187420-MTH_783"/>
<dbReference type="EnsemblBacteria" id="AAB85285">
    <property type="protein sequence ID" value="AAB85285"/>
    <property type="gene ID" value="MTH_783"/>
</dbReference>
<dbReference type="GeneID" id="82297235"/>
<dbReference type="KEGG" id="mth:MTH_783"/>
<dbReference type="PATRIC" id="fig|187420.15.peg.770"/>
<dbReference type="HOGENOM" id="CLU_126929_2_0_2"/>
<dbReference type="InParanoid" id="O26876"/>
<dbReference type="Proteomes" id="UP000005223">
    <property type="component" value="Chromosome"/>
</dbReference>
<dbReference type="GO" id="GO:0016151">
    <property type="term" value="F:nickel cation binding"/>
    <property type="evidence" value="ECO:0007669"/>
    <property type="project" value="UniProtKB-UniRule"/>
</dbReference>
<dbReference type="GO" id="GO:0008270">
    <property type="term" value="F:zinc ion binding"/>
    <property type="evidence" value="ECO:0007669"/>
    <property type="project" value="UniProtKB-UniRule"/>
</dbReference>
<dbReference type="GO" id="GO:0051604">
    <property type="term" value="P:protein maturation"/>
    <property type="evidence" value="ECO:0007669"/>
    <property type="project" value="InterPro"/>
</dbReference>
<dbReference type="GO" id="GO:0036211">
    <property type="term" value="P:protein modification process"/>
    <property type="evidence" value="ECO:0007669"/>
    <property type="project" value="UniProtKB-UniRule"/>
</dbReference>
<dbReference type="Gene3D" id="3.30.2320.80">
    <property type="match status" value="1"/>
</dbReference>
<dbReference type="HAMAP" id="MF_00213">
    <property type="entry name" value="HypA_HybF"/>
    <property type="match status" value="1"/>
</dbReference>
<dbReference type="InterPro" id="IPR020538">
    <property type="entry name" value="Hydgase_Ni_incorp_HypA/HybF_CS"/>
</dbReference>
<dbReference type="InterPro" id="IPR000688">
    <property type="entry name" value="HypA/HybF"/>
</dbReference>
<dbReference type="NCBIfam" id="TIGR00100">
    <property type="entry name" value="hypA"/>
    <property type="match status" value="1"/>
</dbReference>
<dbReference type="NCBIfam" id="NF001976">
    <property type="entry name" value="PRK00762.1"/>
    <property type="match status" value="1"/>
</dbReference>
<dbReference type="PANTHER" id="PTHR34535">
    <property type="entry name" value="HYDROGENASE MATURATION FACTOR HYPA"/>
    <property type="match status" value="1"/>
</dbReference>
<dbReference type="PANTHER" id="PTHR34535:SF3">
    <property type="entry name" value="HYDROGENASE MATURATION FACTOR HYPA"/>
    <property type="match status" value="1"/>
</dbReference>
<dbReference type="Pfam" id="PF01155">
    <property type="entry name" value="HypA"/>
    <property type="match status" value="1"/>
</dbReference>
<dbReference type="PIRSF" id="PIRSF004761">
    <property type="entry name" value="Hydrgn_mat_HypA"/>
    <property type="match status" value="1"/>
</dbReference>
<dbReference type="PROSITE" id="PS01249">
    <property type="entry name" value="HYPA"/>
    <property type="match status" value="1"/>
</dbReference>
<accession>O26876</accession>
<proteinExistence type="inferred from homology"/>
<feature type="chain" id="PRO_0000129081" description="Hydrogenase maturation factor HypA">
    <location>
        <begin position="1"/>
        <end position="122"/>
    </location>
</feature>
<feature type="binding site" evidence="1">
    <location>
        <position position="2"/>
    </location>
    <ligand>
        <name>Ni(2+)</name>
        <dbReference type="ChEBI" id="CHEBI:49786"/>
    </ligand>
</feature>
<feature type="binding site" evidence="1">
    <location>
        <position position="73"/>
    </location>
    <ligand>
        <name>Zn(2+)</name>
        <dbReference type="ChEBI" id="CHEBI:29105"/>
    </ligand>
</feature>
<feature type="binding site" evidence="1">
    <location>
        <position position="75"/>
    </location>
    <ligand>
        <name>Zn(2+)</name>
        <dbReference type="ChEBI" id="CHEBI:29105"/>
    </ligand>
</feature>
<feature type="binding site" evidence="1">
    <location>
        <position position="95"/>
    </location>
    <ligand>
        <name>Zn(2+)</name>
        <dbReference type="ChEBI" id="CHEBI:29105"/>
    </ligand>
</feature>
<feature type="binding site" evidence="1">
    <location>
        <position position="98"/>
    </location>
    <ligand>
        <name>Zn(2+)</name>
        <dbReference type="ChEBI" id="CHEBI:29105"/>
    </ligand>
</feature>
<evidence type="ECO:0000255" key="1">
    <source>
        <dbReference type="HAMAP-Rule" id="MF_00213"/>
    </source>
</evidence>
<evidence type="ECO:0000305" key="2"/>
<comment type="function">
    <text evidence="1">Involved in the maturation of [NiFe] hydrogenases. Required for nickel insertion into the metal center of the hydrogenase.</text>
</comment>
<comment type="similarity">
    <text evidence="1 2">Belongs to the HypA/HybF family.</text>
</comment>
<comment type="sequence caution" evidence="2">
    <conflict type="erroneous initiation">
        <sequence resource="EMBL-CDS" id="AAB85285"/>
    </conflict>
</comment>
<gene>
    <name evidence="1" type="primary">hypA</name>
    <name type="ordered locus">MTH_783</name>
</gene>
<reference key="1">
    <citation type="journal article" date="1997" name="J. Bacteriol.">
        <title>Complete genome sequence of Methanobacterium thermoautotrophicum deltaH: functional analysis and comparative genomics.</title>
        <authorList>
            <person name="Smith D.R."/>
            <person name="Doucette-Stamm L.A."/>
            <person name="Deloughery C."/>
            <person name="Lee H.-M."/>
            <person name="Dubois J."/>
            <person name="Aldredge T."/>
            <person name="Bashirzadeh R."/>
            <person name="Blakely D."/>
            <person name="Cook R."/>
            <person name="Gilbert K."/>
            <person name="Harrison D."/>
            <person name="Hoang L."/>
            <person name="Keagle P."/>
            <person name="Lumm W."/>
            <person name="Pothier B."/>
            <person name="Qiu D."/>
            <person name="Spadafora R."/>
            <person name="Vicare R."/>
            <person name="Wang Y."/>
            <person name="Wierzbowski J."/>
            <person name="Gibson R."/>
            <person name="Jiwani N."/>
            <person name="Caruso A."/>
            <person name="Bush D."/>
            <person name="Safer H."/>
            <person name="Patwell D."/>
            <person name="Prabhakar S."/>
            <person name="McDougall S."/>
            <person name="Shimer G."/>
            <person name="Goyal A."/>
            <person name="Pietrovski S."/>
            <person name="Church G.M."/>
            <person name="Daniels C.J."/>
            <person name="Mao J.-I."/>
            <person name="Rice P."/>
            <person name="Noelling J."/>
            <person name="Reeve J.N."/>
        </authorList>
    </citation>
    <scope>NUCLEOTIDE SEQUENCE [LARGE SCALE GENOMIC DNA]</scope>
    <source>
        <strain>ATCC 29096 / DSM 1053 / JCM 10044 / NBRC 100330 / Delta H</strain>
    </source>
</reference>
<protein>
    <recommendedName>
        <fullName evidence="1">Hydrogenase maturation factor HypA</fullName>
    </recommendedName>
</protein>
<name>HYPA_METTH</name>
<keyword id="KW-0479">Metal-binding</keyword>
<keyword id="KW-0533">Nickel</keyword>
<keyword id="KW-1185">Reference proteome</keyword>
<keyword id="KW-0862">Zinc</keyword>
<organism>
    <name type="scientific">Methanothermobacter thermautotrophicus (strain ATCC 29096 / DSM 1053 / JCM 10044 / NBRC 100330 / Delta H)</name>
    <name type="common">Methanobacterium thermoautotrophicum</name>
    <dbReference type="NCBI Taxonomy" id="187420"/>
    <lineage>
        <taxon>Archaea</taxon>
        <taxon>Methanobacteriati</taxon>
        <taxon>Methanobacteriota</taxon>
        <taxon>Methanomada group</taxon>
        <taxon>Methanobacteria</taxon>
        <taxon>Methanobacteriales</taxon>
        <taxon>Methanobacteriaceae</taxon>
        <taxon>Methanothermobacter</taxon>
    </lineage>
</organism>
<sequence length="122" mass="13478">MHELSMADAIVRTVIDAAEKNDAVEVLEVTVEIGQLTLLNPEQIEFMLDVLSEGTILEGARFNLEVVPVEIECECGYEGVVEADELDHFAPVIKCPACGGHEFHVRAGRECNVKNIKIEKKD</sequence>